<evidence type="ECO:0000250" key="1"/>
<evidence type="ECO:0000250" key="2">
    <source>
        <dbReference type="UniProtKB" id="P00157"/>
    </source>
</evidence>
<evidence type="ECO:0000255" key="3">
    <source>
        <dbReference type="PROSITE-ProRule" id="PRU00967"/>
    </source>
</evidence>
<evidence type="ECO:0000255" key="4">
    <source>
        <dbReference type="PROSITE-ProRule" id="PRU00968"/>
    </source>
</evidence>
<organism>
    <name type="scientific">Akodon mollis</name>
    <name type="common">Soft grass mouse</name>
    <dbReference type="NCBI Taxonomy" id="10075"/>
    <lineage>
        <taxon>Eukaryota</taxon>
        <taxon>Metazoa</taxon>
        <taxon>Chordata</taxon>
        <taxon>Craniata</taxon>
        <taxon>Vertebrata</taxon>
        <taxon>Euteleostomi</taxon>
        <taxon>Mammalia</taxon>
        <taxon>Eutheria</taxon>
        <taxon>Euarchontoglires</taxon>
        <taxon>Glires</taxon>
        <taxon>Rodentia</taxon>
        <taxon>Myomorpha</taxon>
        <taxon>Muroidea</taxon>
        <taxon>Cricetidae</taxon>
        <taxon>Sigmodontinae</taxon>
        <taxon>Akodon</taxon>
    </lineage>
</organism>
<sequence length="379" mass="42602">MKILRKNHPLLKIVNHSFIDLPTPSNISSWWNFGSLLGLCLMIQILTGLFLAMHYTSDTTTAFSSVAHICRDVNYGWLIRYLHANGASMFFICLFIHVGRGIYYGSYVLSETWNIGIILFLTTMATAFVGYVLPWGQMSFWGATVITNLLSAIPYIGNTLVEWIWGGFSVDKATLTRFFAFHFILPFIITALALVHLLFLHETGSNNPSGLNSDSDKIPFHPYYTIKDLLGIFLLLLALMILALFFPDILGDPDNFTPANPLNTPAHIKPEWYFLFAYAILRSIPNKLGGVLALILSILILAAFPLLNTSKQHGLIFRPITQTIYWTFIANLLVLTWIGGQPVEYPFTTIGQIASITYFTIIIILMPVSNTIENNIIKL</sequence>
<proteinExistence type="inferred from homology"/>
<geneLocation type="mitochondrion"/>
<keyword id="KW-0249">Electron transport</keyword>
<keyword id="KW-0349">Heme</keyword>
<keyword id="KW-0408">Iron</keyword>
<keyword id="KW-0472">Membrane</keyword>
<keyword id="KW-0479">Metal-binding</keyword>
<keyword id="KW-0496">Mitochondrion</keyword>
<keyword id="KW-0999">Mitochondrion inner membrane</keyword>
<keyword id="KW-0679">Respiratory chain</keyword>
<keyword id="KW-0812">Transmembrane</keyword>
<keyword id="KW-1133">Transmembrane helix</keyword>
<keyword id="KW-0813">Transport</keyword>
<keyword id="KW-0830">Ubiquinone</keyword>
<gene>
    <name type="primary">MT-CYB</name>
    <name type="synonym">COB</name>
    <name type="synonym">CYTB</name>
    <name type="synonym">MTCYB</name>
</gene>
<protein>
    <recommendedName>
        <fullName>Cytochrome b</fullName>
    </recommendedName>
    <alternativeName>
        <fullName>Complex III subunit 3</fullName>
    </alternativeName>
    <alternativeName>
        <fullName>Complex III subunit III</fullName>
    </alternativeName>
    <alternativeName>
        <fullName>Cytochrome b-c1 complex subunit 3</fullName>
    </alternativeName>
    <alternativeName>
        <fullName>Ubiquinol-cytochrome-c reductase complex cytochrome b subunit</fullName>
    </alternativeName>
</protein>
<dbReference type="EMBL" id="U03546">
    <property type="protein sequence ID" value="AAD12572.2"/>
    <property type="molecule type" value="Genomic_DNA"/>
</dbReference>
<dbReference type="SMR" id="P48519"/>
<dbReference type="GO" id="GO:0005743">
    <property type="term" value="C:mitochondrial inner membrane"/>
    <property type="evidence" value="ECO:0007669"/>
    <property type="project" value="UniProtKB-SubCell"/>
</dbReference>
<dbReference type="GO" id="GO:0045275">
    <property type="term" value="C:respiratory chain complex III"/>
    <property type="evidence" value="ECO:0007669"/>
    <property type="project" value="InterPro"/>
</dbReference>
<dbReference type="GO" id="GO:0046872">
    <property type="term" value="F:metal ion binding"/>
    <property type="evidence" value="ECO:0007669"/>
    <property type="project" value="UniProtKB-KW"/>
</dbReference>
<dbReference type="GO" id="GO:0008121">
    <property type="term" value="F:ubiquinol-cytochrome-c reductase activity"/>
    <property type="evidence" value="ECO:0007669"/>
    <property type="project" value="InterPro"/>
</dbReference>
<dbReference type="GO" id="GO:0006122">
    <property type="term" value="P:mitochondrial electron transport, ubiquinol to cytochrome c"/>
    <property type="evidence" value="ECO:0007669"/>
    <property type="project" value="TreeGrafter"/>
</dbReference>
<dbReference type="CDD" id="cd00290">
    <property type="entry name" value="cytochrome_b_C"/>
    <property type="match status" value="1"/>
</dbReference>
<dbReference type="CDD" id="cd00284">
    <property type="entry name" value="Cytochrome_b_N"/>
    <property type="match status" value="1"/>
</dbReference>
<dbReference type="FunFam" id="1.20.810.10:FF:000002">
    <property type="entry name" value="Cytochrome b"/>
    <property type="match status" value="1"/>
</dbReference>
<dbReference type="Gene3D" id="1.20.810.10">
    <property type="entry name" value="Cytochrome Bc1 Complex, Chain C"/>
    <property type="match status" value="1"/>
</dbReference>
<dbReference type="InterPro" id="IPR005798">
    <property type="entry name" value="Cyt_b/b6_C"/>
</dbReference>
<dbReference type="InterPro" id="IPR036150">
    <property type="entry name" value="Cyt_b/b6_C_sf"/>
</dbReference>
<dbReference type="InterPro" id="IPR005797">
    <property type="entry name" value="Cyt_b/b6_N"/>
</dbReference>
<dbReference type="InterPro" id="IPR027387">
    <property type="entry name" value="Cytb/b6-like_sf"/>
</dbReference>
<dbReference type="InterPro" id="IPR030689">
    <property type="entry name" value="Cytochrome_b"/>
</dbReference>
<dbReference type="InterPro" id="IPR048260">
    <property type="entry name" value="Cytochrome_b_C_euk/bac"/>
</dbReference>
<dbReference type="InterPro" id="IPR048259">
    <property type="entry name" value="Cytochrome_b_N_euk/bac"/>
</dbReference>
<dbReference type="InterPro" id="IPR016174">
    <property type="entry name" value="Di-haem_cyt_TM"/>
</dbReference>
<dbReference type="PANTHER" id="PTHR19271">
    <property type="entry name" value="CYTOCHROME B"/>
    <property type="match status" value="1"/>
</dbReference>
<dbReference type="PANTHER" id="PTHR19271:SF16">
    <property type="entry name" value="CYTOCHROME B"/>
    <property type="match status" value="1"/>
</dbReference>
<dbReference type="Pfam" id="PF00032">
    <property type="entry name" value="Cytochrom_B_C"/>
    <property type="match status" value="1"/>
</dbReference>
<dbReference type="Pfam" id="PF00033">
    <property type="entry name" value="Cytochrome_B"/>
    <property type="match status" value="1"/>
</dbReference>
<dbReference type="PIRSF" id="PIRSF038885">
    <property type="entry name" value="COB"/>
    <property type="match status" value="1"/>
</dbReference>
<dbReference type="SUPFAM" id="SSF81648">
    <property type="entry name" value="a domain/subunit of cytochrome bc1 complex (Ubiquinol-cytochrome c reductase)"/>
    <property type="match status" value="1"/>
</dbReference>
<dbReference type="SUPFAM" id="SSF81342">
    <property type="entry name" value="Transmembrane di-heme cytochromes"/>
    <property type="match status" value="1"/>
</dbReference>
<dbReference type="PROSITE" id="PS51003">
    <property type="entry name" value="CYTB_CTER"/>
    <property type="match status" value="1"/>
</dbReference>
<dbReference type="PROSITE" id="PS51002">
    <property type="entry name" value="CYTB_NTER"/>
    <property type="match status" value="1"/>
</dbReference>
<comment type="function">
    <text evidence="2">Component of the ubiquinol-cytochrome c reductase complex (complex III or cytochrome b-c1 complex) that is part of the mitochondrial respiratory chain. The b-c1 complex mediates electron transfer from ubiquinol to cytochrome c. Contributes to the generation of a proton gradient across the mitochondrial membrane that is then used for ATP synthesis.</text>
</comment>
<comment type="cofactor">
    <cofactor evidence="2">
        <name>heme b</name>
        <dbReference type="ChEBI" id="CHEBI:60344"/>
    </cofactor>
    <text evidence="2">Binds 2 heme b groups non-covalently.</text>
</comment>
<comment type="subunit">
    <text evidence="2">The cytochrome bc1 complex contains 11 subunits: 3 respiratory subunits (MT-CYB, CYC1 and UQCRFS1), 2 core proteins (UQCRC1 and UQCRC2) and 6 low-molecular weight proteins (UQCRH/QCR6, UQCRB/QCR7, UQCRQ/QCR8, UQCR10/QCR9, UQCR11/QCR10 and a cleavage product of UQCRFS1). This cytochrome bc1 complex then forms a dimer.</text>
</comment>
<comment type="subcellular location">
    <subcellularLocation>
        <location evidence="2">Mitochondrion inner membrane</location>
        <topology evidence="2">Multi-pass membrane protein</topology>
    </subcellularLocation>
</comment>
<comment type="miscellaneous">
    <text evidence="1">Heme 1 (or BL or b562) is low-potential and absorbs at about 562 nm, and heme 2 (or BH or b566) is high-potential and absorbs at about 566 nm.</text>
</comment>
<comment type="similarity">
    <text evidence="3 4">Belongs to the cytochrome b family.</text>
</comment>
<comment type="caution">
    <text evidence="2">The full-length protein contains only eight transmembrane helices, not nine as predicted by bioinformatics tools.</text>
</comment>
<name>CYB_AKOMO</name>
<feature type="chain" id="PRO_0000060550" description="Cytochrome b">
    <location>
        <begin position="1"/>
        <end position="379"/>
    </location>
</feature>
<feature type="transmembrane region" description="Helical" evidence="2">
    <location>
        <begin position="33"/>
        <end position="53"/>
    </location>
</feature>
<feature type="transmembrane region" description="Helical" evidence="2">
    <location>
        <begin position="77"/>
        <end position="98"/>
    </location>
</feature>
<feature type="transmembrane region" description="Helical" evidence="2">
    <location>
        <begin position="113"/>
        <end position="133"/>
    </location>
</feature>
<feature type="transmembrane region" description="Helical" evidence="2">
    <location>
        <begin position="178"/>
        <end position="198"/>
    </location>
</feature>
<feature type="transmembrane region" description="Helical" evidence="2">
    <location>
        <begin position="226"/>
        <end position="246"/>
    </location>
</feature>
<feature type="transmembrane region" description="Helical" evidence="2">
    <location>
        <begin position="288"/>
        <end position="308"/>
    </location>
</feature>
<feature type="transmembrane region" description="Helical" evidence="2">
    <location>
        <begin position="320"/>
        <end position="340"/>
    </location>
</feature>
<feature type="transmembrane region" description="Helical" evidence="2">
    <location>
        <begin position="347"/>
        <end position="367"/>
    </location>
</feature>
<feature type="binding site" description="axial binding residue" evidence="2">
    <location>
        <position position="83"/>
    </location>
    <ligand>
        <name>heme b</name>
        <dbReference type="ChEBI" id="CHEBI:60344"/>
        <label>b562</label>
    </ligand>
    <ligandPart>
        <name>Fe</name>
        <dbReference type="ChEBI" id="CHEBI:18248"/>
    </ligandPart>
</feature>
<feature type="binding site" description="axial binding residue" evidence="2">
    <location>
        <position position="97"/>
    </location>
    <ligand>
        <name>heme b</name>
        <dbReference type="ChEBI" id="CHEBI:60344"/>
        <label>b566</label>
    </ligand>
    <ligandPart>
        <name>Fe</name>
        <dbReference type="ChEBI" id="CHEBI:18248"/>
    </ligandPart>
</feature>
<feature type="binding site" description="axial binding residue" evidence="2">
    <location>
        <position position="182"/>
    </location>
    <ligand>
        <name>heme b</name>
        <dbReference type="ChEBI" id="CHEBI:60344"/>
        <label>b562</label>
    </ligand>
    <ligandPart>
        <name>Fe</name>
        <dbReference type="ChEBI" id="CHEBI:18248"/>
    </ligandPart>
</feature>
<feature type="binding site" description="axial binding residue" evidence="2">
    <location>
        <position position="196"/>
    </location>
    <ligand>
        <name>heme b</name>
        <dbReference type="ChEBI" id="CHEBI:60344"/>
        <label>b566</label>
    </ligand>
    <ligandPart>
        <name>Fe</name>
        <dbReference type="ChEBI" id="CHEBI:18248"/>
    </ligandPart>
</feature>
<feature type="binding site" evidence="2">
    <location>
        <position position="201"/>
    </location>
    <ligand>
        <name>a ubiquinone</name>
        <dbReference type="ChEBI" id="CHEBI:16389"/>
    </ligand>
</feature>
<reference key="1">
    <citation type="submission" date="2003-12" db="EMBL/GenBank/DDBJ databases">
        <title>Molecular phylogenetics and diversification of South American grass mice, genus Akodon.</title>
        <authorList>
            <person name="Smith M.F."/>
            <person name="Patton J.L."/>
        </authorList>
    </citation>
    <scope>NUCLEOTIDE SEQUENCE [GENOMIC DNA]</scope>
    <source>
        <strain>Isolate LSUMZ 27007</strain>
        <strain>Isolate LSUMZ 27009</strain>
        <strain>Isolate LSUMZ 27010</strain>
        <tissue>Liver</tissue>
    </source>
</reference>
<reference key="2">
    <citation type="journal article" date="1993" name="Biol. J. Linn. Soc. Lond.">
        <title>The diversification of South American murid rodents: evidence from mitochondrial DNA sequence data for the akodontine tribe.</title>
        <authorList>
            <person name="Smith M.F."/>
            <person name="Patton J.L."/>
        </authorList>
    </citation>
    <scope>NUCLEOTIDE SEQUENCE [GENOMIC DNA] OF 1-267</scope>
    <source>
        <strain>Isolate LSUMZ 27007</strain>
        <strain>Isolate LSUMZ 27009</strain>
        <strain>Isolate LSUMZ 27010</strain>
        <tissue>Liver</tissue>
    </source>
</reference>
<accession>P48519</accession>